<gene>
    <name type="ordered locus">CFF8240_0066</name>
</gene>
<feature type="chain" id="PRO_1000003717" description="Nucleoid-associated protein CFF8240_0066">
    <location>
        <begin position="1"/>
        <end position="103"/>
    </location>
</feature>
<proteinExistence type="inferred from homology"/>
<name>Y066_CAMFF</name>
<keyword id="KW-0963">Cytoplasm</keyword>
<keyword id="KW-0238">DNA-binding</keyword>
<sequence>MFKDFDFSKMGEMLSEAQKKAAEFENEIAAKEFVAKSGGGLISVKANGRSQILDISIDDTLLEDKESLQILLISAINDAIKLSEDEKKRAASAMFGGLGGFGV</sequence>
<evidence type="ECO:0000255" key="1">
    <source>
        <dbReference type="HAMAP-Rule" id="MF_00274"/>
    </source>
</evidence>
<organism>
    <name type="scientific">Campylobacter fetus subsp. fetus (strain 82-40)</name>
    <dbReference type="NCBI Taxonomy" id="360106"/>
    <lineage>
        <taxon>Bacteria</taxon>
        <taxon>Pseudomonadati</taxon>
        <taxon>Campylobacterota</taxon>
        <taxon>Epsilonproteobacteria</taxon>
        <taxon>Campylobacterales</taxon>
        <taxon>Campylobacteraceae</taxon>
        <taxon>Campylobacter</taxon>
    </lineage>
</organism>
<comment type="function">
    <text evidence="1">Binds to DNA and alters its conformation. May be involved in regulation of gene expression, nucleoid organization and DNA protection.</text>
</comment>
<comment type="subunit">
    <text evidence="1">Homodimer.</text>
</comment>
<comment type="subcellular location">
    <subcellularLocation>
        <location evidence="1">Cytoplasm</location>
        <location evidence="1">Nucleoid</location>
    </subcellularLocation>
</comment>
<comment type="similarity">
    <text evidence="1">Belongs to the YbaB/EbfC family.</text>
</comment>
<protein>
    <recommendedName>
        <fullName evidence="1">Nucleoid-associated protein CFF8240_0066</fullName>
    </recommendedName>
</protein>
<dbReference type="EMBL" id="CP000487">
    <property type="protein sequence ID" value="ABK81912.1"/>
    <property type="molecule type" value="Genomic_DNA"/>
</dbReference>
<dbReference type="RefSeq" id="WP_002848044.1">
    <property type="nucleotide sequence ID" value="NC_008599.1"/>
</dbReference>
<dbReference type="SMR" id="A0RM43"/>
<dbReference type="KEGG" id="cff:CFF8240_0066"/>
<dbReference type="eggNOG" id="COG0718">
    <property type="taxonomic scope" value="Bacteria"/>
</dbReference>
<dbReference type="HOGENOM" id="CLU_140930_2_1_7"/>
<dbReference type="Proteomes" id="UP000000760">
    <property type="component" value="Chromosome"/>
</dbReference>
<dbReference type="GO" id="GO:0043590">
    <property type="term" value="C:bacterial nucleoid"/>
    <property type="evidence" value="ECO:0007669"/>
    <property type="project" value="UniProtKB-UniRule"/>
</dbReference>
<dbReference type="GO" id="GO:0005829">
    <property type="term" value="C:cytosol"/>
    <property type="evidence" value="ECO:0007669"/>
    <property type="project" value="TreeGrafter"/>
</dbReference>
<dbReference type="GO" id="GO:0003677">
    <property type="term" value="F:DNA binding"/>
    <property type="evidence" value="ECO:0007669"/>
    <property type="project" value="UniProtKB-UniRule"/>
</dbReference>
<dbReference type="Gene3D" id="3.30.1310.10">
    <property type="entry name" value="Nucleoid-associated protein YbaB-like domain"/>
    <property type="match status" value="1"/>
</dbReference>
<dbReference type="HAMAP" id="MF_00274">
    <property type="entry name" value="DNA_YbaB_EbfC"/>
    <property type="match status" value="1"/>
</dbReference>
<dbReference type="InterPro" id="IPR036894">
    <property type="entry name" value="YbaB-like_sf"/>
</dbReference>
<dbReference type="InterPro" id="IPR004401">
    <property type="entry name" value="YbaB/EbfC"/>
</dbReference>
<dbReference type="NCBIfam" id="TIGR00103">
    <property type="entry name" value="DNA_YbaB_EbfC"/>
    <property type="match status" value="1"/>
</dbReference>
<dbReference type="PANTHER" id="PTHR33449">
    <property type="entry name" value="NUCLEOID-ASSOCIATED PROTEIN YBAB"/>
    <property type="match status" value="1"/>
</dbReference>
<dbReference type="PANTHER" id="PTHR33449:SF1">
    <property type="entry name" value="NUCLEOID-ASSOCIATED PROTEIN YBAB"/>
    <property type="match status" value="1"/>
</dbReference>
<dbReference type="Pfam" id="PF02575">
    <property type="entry name" value="YbaB_DNA_bd"/>
    <property type="match status" value="1"/>
</dbReference>
<dbReference type="PIRSF" id="PIRSF004555">
    <property type="entry name" value="UCP004555"/>
    <property type="match status" value="1"/>
</dbReference>
<dbReference type="SUPFAM" id="SSF82607">
    <property type="entry name" value="YbaB-like"/>
    <property type="match status" value="1"/>
</dbReference>
<accession>A0RM43</accession>
<reference key="1">
    <citation type="submission" date="2006-11" db="EMBL/GenBank/DDBJ databases">
        <title>Sequence of Campylobacter fetus subsp. fetus 82-40.</title>
        <authorList>
            <person name="Fouts D.E."/>
            <person name="Nelson K.E."/>
        </authorList>
    </citation>
    <scope>NUCLEOTIDE SEQUENCE [LARGE SCALE GENOMIC DNA]</scope>
    <source>
        <strain>82-40</strain>
    </source>
</reference>